<protein>
    <recommendedName>
        <fullName evidence="1">Lipoyl synthase</fullName>
        <ecNumber evidence="1">2.8.1.8</ecNumber>
    </recommendedName>
    <alternativeName>
        <fullName evidence="1">Lip-syn</fullName>
        <shortName evidence="1">LS</shortName>
    </alternativeName>
    <alternativeName>
        <fullName evidence="1">Lipoate synthase</fullName>
    </alternativeName>
    <alternativeName>
        <fullName evidence="1">Lipoic acid synthase</fullName>
    </alternativeName>
    <alternativeName>
        <fullName evidence="1">Sulfur insertion protein LipA</fullName>
    </alternativeName>
</protein>
<feature type="chain" id="PRO_1000071731" description="Lipoyl synthase">
    <location>
        <begin position="1"/>
        <end position="321"/>
    </location>
</feature>
<feature type="domain" description="Radical SAM core" evidence="2">
    <location>
        <begin position="80"/>
        <end position="297"/>
    </location>
</feature>
<feature type="binding site" evidence="1">
    <location>
        <position position="68"/>
    </location>
    <ligand>
        <name>[4Fe-4S] cluster</name>
        <dbReference type="ChEBI" id="CHEBI:49883"/>
        <label>1</label>
    </ligand>
</feature>
<feature type="binding site" evidence="1">
    <location>
        <position position="73"/>
    </location>
    <ligand>
        <name>[4Fe-4S] cluster</name>
        <dbReference type="ChEBI" id="CHEBI:49883"/>
        <label>1</label>
    </ligand>
</feature>
<feature type="binding site" evidence="1">
    <location>
        <position position="79"/>
    </location>
    <ligand>
        <name>[4Fe-4S] cluster</name>
        <dbReference type="ChEBI" id="CHEBI:49883"/>
        <label>1</label>
    </ligand>
</feature>
<feature type="binding site" evidence="1">
    <location>
        <position position="94"/>
    </location>
    <ligand>
        <name>[4Fe-4S] cluster</name>
        <dbReference type="ChEBI" id="CHEBI:49883"/>
        <label>2</label>
        <note>4Fe-4S-S-AdoMet</note>
    </ligand>
</feature>
<feature type="binding site" evidence="1">
    <location>
        <position position="98"/>
    </location>
    <ligand>
        <name>[4Fe-4S] cluster</name>
        <dbReference type="ChEBI" id="CHEBI:49883"/>
        <label>2</label>
        <note>4Fe-4S-S-AdoMet</note>
    </ligand>
</feature>
<feature type="binding site" evidence="1">
    <location>
        <position position="101"/>
    </location>
    <ligand>
        <name>[4Fe-4S] cluster</name>
        <dbReference type="ChEBI" id="CHEBI:49883"/>
        <label>2</label>
        <note>4Fe-4S-S-AdoMet</note>
    </ligand>
</feature>
<feature type="binding site" evidence="1">
    <location>
        <position position="308"/>
    </location>
    <ligand>
        <name>[4Fe-4S] cluster</name>
        <dbReference type="ChEBI" id="CHEBI:49883"/>
        <label>1</label>
    </ligand>
</feature>
<proteinExistence type="inferred from homology"/>
<organism>
    <name type="scientific">Vibrio cholerae serotype O1 (strain ATCC 39541 / Classical Ogawa 395 / O395)</name>
    <dbReference type="NCBI Taxonomy" id="345073"/>
    <lineage>
        <taxon>Bacteria</taxon>
        <taxon>Pseudomonadati</taxon>
        <taxon>Pseudomonadota</taxon>
        <taxon>Gammaproteobacteria</taxon>
        <taxon>Vibrionales</taxon>
        <taxon>Vibrionaceae</taxon>
        <taxon>Vibrio</taxon>
    </lineage>
</organism>
<reference key="1">
    <citation type="submission" date="2007-03" db="EMBL/GenBank/DDBJ databases">
        <authorList>
            <person name="Heidelberg J."/>
        </authorList>
    </citation>
    <scope>NUCLEOTIDE SEQUENCE [LARGE SCALE GENOMIC DNA]</scope>
    <source>
        <strain>ATCC 39541 / Classical Ogawa 395 / O395</strain>
    </source>
</reference>
<reference key="2">
    <citation type="journal article" date="2008" name="PLoS ONE">
        <title>A recalibrated molecular clock and independent origins for the cholera pandemic clones.</title>
        <authorList>
            <person name="Feng L."/>
            <person name="Reeves P.R."/>
            <person name="Lan R."/>
            <person name="Ren Y."/>
            <person name="Gao C."/>
            <person name="Zhou Z."/>
            <person name="Ren Y."/>
            <person name="Cheng J."/>
            <person name="Wang W."/>
            <person name="Wang J."/>
            <person name="Qian W."/>
            <person name="Li D."/>
            <person name="Wang L."/>
        </authorList>
    </citation>
    <scope>NUCLEOTIDE SEQUENCE [LARGE SCALE GENOMIC DNA]</scope>
    <source>
        <strain>ATCC 39541 / Classical Ogawa 395 / O395</strain>
    </source>
</reference>
<keyword id="KW-0004">4Fe-4S</keyword>
<keyword id="KW-0963">Cytoplasm</keyword>
<keyword id="KW-0408">Iron</keyword>
<keyword id="KW-0411">Iron-sulfur</keyword>
<keyword id="KW-0479">Metal-binding</keyword>
<keyword id="KW-0949">S-adenosyl-L-methionine</keyword>
<keyword id="KW-0808">Transferase</keyword>
<sequence>MSKPIQMERGVKYRDADKMALIPIKNMPTEQKEVLRKPEWMKIKLPADSQRIQDIKAAMRKNNLHSVCEEASCPNLAECFNHGTATFMILGAICTRRCPFCDVAHGRPNAPEAEEPKKLAQTIHDMKLKYVVITSVDRDDLRDGGAQHFADCNREIRALNPHIKIETLVPDFRGRMEVALEALKDNPPDVFNHNLETAPRLYRKVRPGANYKWSLELLRQFKEQHPHVPTKSGLMMGLGETKEEIVEVLKDLRAHGVTMLTLGQYLAPSRHHLPVERYVPPAEFDELKEIALELGFTHAACGPFVRSSYHADLQAKGLEVK</sequence>
<evidence type="ECO:0000255" key="1">
    <source>
        <dbReference type="HAMAP-Rule" id="MF_00206"/>
    </source>
</evidence>
<evidence type="ECO:0000255" key="2">
    <source>
        <dbReference type="PROSITE-ProRule" id="PRU01266"/>
    </source>
</evidence>
<name>LIPA_VIBC3</name>
<accession>A5F2Y0</accession>
<accession>C3LYV4</accession>
<comment type="function">
    <text evidence="1">Catalyzes the radical-mediated insertion of two sulfur atoms into the C-6 and C-8 positions of the octanoyl moiety bound to the lipoyl domains of lipoate-dependent enzymes, thereby converting the octanoylated domains into lipoylated derivatives.</text>
</comment>
<comment type="catalytic activity">
    <reaction evidence="1">
        <text>[[Fe-S] cluster scaffold protein carrying a second [4Fe-4S](2+) cluster] + N(6)-octanoyl-L-lysyl-[protein] + 2 oxidized [2Fe-2S]-[ferredoxin] + 2 S-adenosyl-L-methionine + 4 H(+) = [[Fe-S] cluster scaffold protein] + N(6)-[(R)-dihydrolipoyl]-L-lysyl-[protein] + 4 Fe(3+) + 2 hydrogen sulfide + 2 5'-deoxyadenosine + 2 L-methionine + 2 reduced [2Fe-2S]-[ferredoxin]</text>
        <dbReference type="Rhea" id="RHEA:16585"/>
        <dbReference type="Rhea" id="RHEA-COMP:9928"/>
        <dbReference type="Rhea" id="RHEA-COMP:10000"/>
        <dbReference type="Rhea" id="RHEA-COMP:10001"/>
        <dbReference type="Rhea" id="RHEA-COMP:10475"/>
        <dbReference type="Rhea" id="RHEA-COMP:14568"/>
        <dbReference type="Rhea" id="RHEA-COMP:14569"/>
        <dbReference type="ChEBI" id="CHEBI:15378"/>
        <dbReference type="ChEBI" id="CHEBI:17319"/>
        <dbReference type="ChEBI" id="CHEBI:29034"/>
        <dbReference type="ChEBI" id="CHEBI:29919"/>
        <dbReference type="ChEBI" id="CHEBI:33722"/>
        <dbReference type="ChEBI" id="CHEBI:33737"/>
        <dbReference type="ChEBI" id="CHEBI:33738"/>
        <dbReference type="ChEBI" id="CHEBI:57844"/>
        <dbReference type="ChEBI" id="CHEBI:59789"/>
        <dbReference type="ChEBI" id="CHEBI:78809"/>
        <dbReference type="ChEBI" id="CHEBI:83100"/>
        <dbReference type="EC" id="2.8.1.8"/>
    </reaction>
</comment>
<comment type="cofactor">
    <cofactor evidence="1">
        <name>[4Fe-4S] cluster</name>
        <dbReference type="ChEBI" id="CHEBI:49883"/>
    </cofactor>
    <text evidence="1">Binds 2 [4Fe-4S] clusters per subunit. One cluster is coordinated with 3 cysteines and an exchangeable S-adenosyl-L-methionine.</text>
</comment>
<comment type="pathway">
    <text evidence="1">Protein modification; protein lipoylation via endogenous pathway; protein N(6)-(lipoyl)lysine from octanoyl-[acyl-carrier-protein]: step 2/2.</text>
</comment>
<comment type="subcellular location">
    <subcellularLocation>
        <location evidence="1">Cytoplasm</location>
    </subcellularLocation>
</comment>
<comment type="similarity">
    <text evidence="1">Belongs to the radical SAM superfamily. Lipoyl synthase family.</text>
</comment>
<gene>
    <name evidence="1" type="primary">lipA</name>
    <name type="ordered locus">VC0395_A0467</name>
    <name type="ordered locus">VC395_0958</name>
</gene>
<dbReference type="EC" id="2.8.1.8" evidence="1"/>
<dbReference type="EMBL" id="CP000627">
    <property type="protein sequence ID" value="ABQ19826.1"/>
    <property type="molecule type" value="Genomic_DNA"/>
</dbReference>
<dbReference type="EMBL" id="CP001235">
    <property type="protein sequence ID" value="ACP08970.1"/>
    <property type="molecule type" value="Genomic_DNA"/>
</dbReference>
<dbReference type="RefSeq" id="WP_000042590.1">
    <property type="nucleotide sequence ID" value="NZ_JAACZH010000005.1"/>
</dbReference>
<dbReference type="SMR" id="A5F2Y0"/>
<dbReference type="GeneID" id="89514946"/>
<dbReference type="KEGG" id="vco:VC0395_A0467"/>
<dbReference type="KEGG" id="vcr:VC395_0958"/>
<dbReference type="PATRIC" id="fig|345073.21.peg.929"/>
<dbReference type="eggNOG" id="COG0320">
    <property type="taxonomic scope" value="Bacteria"/>
</dbReference>
<dbReference type="HOGENOM" id="CLU_033144_2_1_6"/>
<dbReference type="OrthoDB" id="9787898at2"/>
<dbReference type="UniPathway" id="UPA00538">
    <property type="reaction ID" value="UER00593"/>
</dbReference>
<dbReference type="Proteomes" id="UP000000249">
    <property type="component" value="Chromosome 2"/>
</dbReference>
<dbReference type="GO" id="GO:0005737">
    <property type="term" value="C:cytoplasm"/>
    <property type="evidence" value="ECO:0007669"/>
    <property type="project" value="UniProtKB-SubCell"/>
</dbReference>
<dbReference type="GO" id="GO:0051539">
    <property type="term" value="F:4 iron, 4 sulfur cluster binding"/>
    <property type="evidence" value="ECO:0007669"/>
    <property type="project" value="UniProtKB-UniRule"/>
</dbReference>
<dbReference type="GO" id="GO:0016992">
    <property type="term" value="F:lipoate synthase activity"/>
    <property type="evidence" value="ECO:0007669"/>
    <property type="project" value="UniProtKB-UniRule"/>
</dbReference>
<dbReference type="GO" id="GO:0046872">
    <property type="term" value="F:metal ion binding"/>
    <property type="evidence" value="ECO:0007669"/>
    <property type="project" value="UniProtKB-KW"/>
</dbReference>
<dbReference type="CDD" id="cd01335">
    <property type="entry name" value="Radical_SAM"/>
    <property type="match status" value="1"/>
</dbReference>
<dbReference type="FunFam" id="3.20.20.70:FF:000023">
    <property type="entry name" value="Lipoyl synthase"/>
    <property type="match status" value="1"/>
</dbReference>
<dbReference type="Gene3D" id="3.20.20.70">
    <property type="entry name" value="Aldolase class I"/>
    <property type="match status" value="1"/>
</dbReference>
<dbReference type="HAMAP" id="MF_00206">
    <property type="entry name" value="Lipoyl_synth"/>
    <property type="match status" value="1"/>
</dbReference>
<dbReference type="InterPro" id="IPR013785">
    <property type="entry name" value="Aldolase_TIM"/>
</dbReference>
<dbReference type="InterPro" id="IPR006638">
    <property type="entry name" value="Elp3/MiaA/NifB-like_rSAM"/>
</dbReference>
<dbReference type="InterPro" id="IPR031691">
    <property type="entry name" value="LIAS_N"/>
</dbReference>
<dbReference type="InterPro" id="IPR003698">
    <property type="entry name" value="Lipoyl_synth"/>
</dbReference>
<dbReference type="InterPro" id="IPR007197">
    <property type="entry name" value="rSAM"/>
</dbReference>
<dbReference type="NCBIfam" id="TIGR00510">
    <property type="entry name" value="lipA"/>
    <property type="match status" value="1"/>
</dbReference>
<dbReference type="NCBIfam" id="NF004019">
    <property type="entry name" value="PRK05481.1"/>
    <property type="match status" value="1"/>
</dbReference>
<dbReference type="NCBIfam" id="NF009544">
    <property type="entry name" value="PRK12928.1"/>
    <property type="match status" value="1"/>
</dbReference>
<dbReference type="PANTHER" id="PTHR10949">
    <property type="entry name" value="LIPOYL SYNTHASE"/>
    <property type="match status" value="1"/>
</dbReference>
<dbReference type="PANTHER" id="PTHR10949:SF0">
    <property type="entry name" value="LIPOYL SYNTHASE, MITOCHONDRIAL"/>
    <property type="match status" value="1"/>
</dbReference>
<dbReference type="Pfam" id="PF16881">
    <property type="entry name" value="LIAS_N"/>
    <property type="match status" value="1"/>
</dbReference>
<dbReference type="Pfam" id="PF04055">
    <property type="entry name" value="Radical_SAM"/>
    <property type="match status" value="1"/>
</dbReference>
<dbReference type="PIRSF" id="PIRSF005963">
    <property type="entry name" value="Lipoyl_synth"/>
    <property type="match status" value="1"/>
</dbReference>
<dbReference type="SFLD" id="SFLDF00271">
    <property type="entry name" value="lipoyl_synthase"/>
    <property type="match status" value="1"/>
</dbReference>
<dbReference type="SFLD" id="SFLDG01058">
    <property type="entry name" value="lipoyl_synthase_like"/>
    <property type="match status" value="1"/>
</dbReference>
<dbReference type="SMART" id="SM00729">
    <property type="entry name" value="Elp3"/>
    <property type="match status" value="1"/>
</dbReference>
<dbReference type="SUPFAM" id="SSF102114">
    <property type="entry name" value="Radical SAM enzymes"/>
    <property type="match status" value="1"/>
</dbReference>
<dbReference type="PROSITE" id="PS51918">
    <property type="entry name" value="RADICAL_SAM"/>
    <property type="match status" value="1"/>
</dbReference>